<feature type="signal peptide" evidence="4">
    <location>
        <begin position="1"/>
        <end position="16"/>
    </location>
</feature>
<feature type="propeptide" id="PRO_0000026052" description="Activation peptide" evidence="1">
    <location>
        <begin position="17"/>
        <end position="59"/>
    </location>
</feature>
<feature type="chain" id="PRO_0000026053" description="Gastricsin">
    <location>
        <begin position="60"/>
        <end position="388"/>
    </location>
</feature>
<feature type="domain" description="Peptidase A1" evidence="2">
    <location>
        <begin position="73"/>
        <end position="385"/>
    </location>
</feature>
<feature type="active site" evidence="3">
    <location>
        <position position="91"/>
    </location>
</feature>
<feature type="active site" evidence="3">
    <location>
        <position position="276"/>
    </location>
</feature>
<feature type="disulfide bond" evidence="1">
    <location>
        <begin position="104"/>
        <end position="109"/>
    </location>
</feature>
<feature type="disulfide bond" evidence="1">
    <location>
        <begin position="267"/>
        <end position="271"/>
    </location>
</feature>
<feature type="disulfide bond" evidence="1">
    <location>
        <begin position="310"/>
        <end position="343"/>
    </location>
</feature>
<evidence type="ECO:0000250" key="1"/>
<evidence type="ECO:0000255" key="2">
    <source>
        <dbReference type="PROSITE-ProRule" id="PRU01103"/>
    </source>
</evidence>
<evidence type="ECO:0000255" key="3">
    <source>
        <dbReference type="PROSITE-ProRule" id="PRU10094"/>
    </source>
</evidence>
<evidence type="ECO:0000269" key="4">
    <source>
    </source>
</evidence>
<evidence type="ECO:0000305" key="5"/>
<accession>Q9N2D3</accession>
<sequence length="388" mass="42503">MKWMVVAFICLQLLEATVVKVPLKKFKSIRETMKEKGLLWEFLKTHKHDPARKYRVSDLSVSYEPMDYMDAAYFGEISIGTPPQNFLVLFDTGSSNLWVPSVYCQSQACTSHSRFNPSASSTYSSNGQTFSLQYGSGSLTGFFGYDTLTVQSIQVPNQEFGLSENEPGTNFVYAQFDGIMGLAYPALSMGGATTAMQGMLQEGALTSPVFSFYLSNQQGSSGGAVIFGGVDSSLYTGQIYWAPVTQELYWQIGIEEFLIGGQASGWCSEGCQAIVDTGTSLLTVPQQYMSAFLEATGAQEDEYGQFLVNCDSIQNLPTLTFIINGVEFPLPPSSYILSNNGYCTVGVEPTYLSSQNSQPLWILGDVFLRSYYSVFDLGNNRVGFATAA</sequence>
<gene>
    <name type="primary">PGC</name>
</gene>
<reference key="1">
    <citation type="journal article" date="2000" name="J. Biochem.">
        <title>New World monkey pepsinogens A and C, and prochymosins. Purification, characterization of enzymatic properties, cDNA cloning, and molecular evolution.</title>
        <authorList>
            <person name="Kageyama T."/>
        </authorList>
    </citation>
    <scope>NUCLEOTIDE SEQUENCE [MRNA]</scope>
    <scope>PROTEIN SEQUENCE OF 17-26</scope>
    <scope>FUNCTION</scope>
    <scope>ACTIVITY REGULATION</scope>
    <source>
        <tissue>Gastric mucosa</tissue>
    </source>
</reference>
<proteinExistence type="evidence at protein level"/>
<comment type="function">
    <text evidence="4">Hydrolyzes a variety of proteins.</text>
</comment>
<comment type="catalytic activity">
    <reaction>
        <text>More restricted specificity than pepsin A, but shows preferential cleavage at Tyr-|-Xaa bonds. High activity on hemoglobin.</text>
        <dbReference type="EC" id="3.4.23.3"/>
    </reaction>
</comment>
<comment type="activity regulation">
    <text evidence="4">Inhibited by pepstatin.</text>
</comment>
<comment type="biophysicochemical properties">
    <phDependence>
        <text>Optimum pH is about 2.</text>
    </phDependence>
</comment>
<comment type="subcellular location">
    <subcellularLocation>
        <location>Secreted</location>
    </subcellularLocation>
</comment>
<comment type="similarity">
    <text evidence="5">Belongs to the peptidase A1 family.</text>
</comment>
<organism>
    <name type="scientific">Callithrix jacchus</name>
    <name type="common">White-tufted-ear marmoset</name>
    <dbReference type="NCBI Taxonomy" id="9483"/>
    <lineage>
        <taxon>Eukaryota</taxon>
        <taxon>Metazoa</taxon>
        <taxon>Chordata</taxon>
        <taxon>Craniata</taxon>
        <taxon>Vertebrata</taxon>
        <taxon>Euteleostomi</taxon>
        <taxon>Mammalia</taxon>
        <taxon>Eutheria</taxon>
        <taxon>Euarchontoglires</taxon>
        <taxon>Primates</taxon>
        <taxon>Haplorrhini</taxon>
        <taxon>Platyrrhini</taxon>
        <taxon>Cebidae</taxon>
        <taxon>Callitrichinae</taxon>
        <taxon>Callithrix</taxon>
        <taxon>Callithrix</taxon>
    </lineage>
</organism>
<dbReference type="EC" id="3.4.23.3"/>
<dbReference type="EMBL" id="AB038385">
    <property type="protein sequence ID" value="BAA90872.1"/>
    <property type="molecule type" value="mRNA"/>
</dbReference>
<dbReference type="PIR" id="JC7246">
    <property type="entry name" value="JC7246"/>
</dbReference>
<dbReference type="RefSeq" id="XP_002746573.1">
    <property type="nucleotide sequence ID" value="XM_002746527.4"/>
</dbReference>
<dbReference type="SMR" id="Q9N2D3"/>
<dbReference type="FunCoup" id="Q9N2D3">
    <property type="interactions" value="118"/>
</dbReference>
<dbReference type="STRING" id="9483.ENSCJAP00000048890"/>
<dbReference type="MEROPS" id="A01.003"/>
<dbReference type="GeneID" id="100404738"/>
<dbReference type="KEGG" id="cjc:100404738"/>
<dbReference type="CTD" id="5225"/>
<dbReference type="eggNOG" id="KOG1339">
    <property type="taxonomic scope" value="Eukaryota"/>
</dbReference>
<dbReference type="HOGENOM" id="CLU_013253_3_0_1"/>
<dbReference type="InParanoid" id="Q9N2D3"/>
<dbReference type="OrthoDB" id="771136at2759"/>
<dbReference type="TreeFam" id="TF314990"/>
<dbReference type="Proteomes" id="UP000008225">
    <property type="component" value="Unplaced"/>
</dbReference>
<dbReference type="GO" id="GO:0005615">
    <property type="term" value="C:extracellular space"/>
    <property type="evidence" value="ECO:0007669"/>
    <property type="project" value="TreeGrafter"/>
</dbReference>
<dbReference type="GO" id="GO:0004190">
    <property type="term" value="F:aspartic-type endopeptidase activity"/>
    <property type="evidence" value="ECO:0007669"/>
    <property type="project" value="UniProtKB-KW"/>
</dbReference>
<dbReference type="GO" id="GO:0007586">
    <property type="term" value="P:digestion"/>
    <property type="evidence" value="ECO:0007669"/>
    <property type="project" value="UniProtKB-KW"/>
</dbReference>
<dbReference type="GO" id="GO:0006508">
    <property type="term" value="P:proteolysis"/>
    <property type="evidence" value="ECO:0007669"/>
    <property type="project" value="UniProtKB-KW"/>
</dbReference>
<dbReference type="CDD" id="cd05477">
    <property type="entry name" value="gastricsin"/>
    <property type="match status" value="1"/>
</dbReference>
<dbReference type="FunFam" id="2.40.70.10:FF:000006">
    <property type="entry name" value="Cathepsin E"/>
    <property type="match status" value="1"/>
</dbReference>
<dbReference type="FunFam" id="2.40.70.10:FF:000004">
    <property type="entry name" value="Pepsin A"/>
    <property type="match status" value="1"/>
</dbReference>
<dbReference type="Gene3D" id="6.10.140.60">
    <property type="match status" value="1"/>
</dbReference>
<dbReference type="Gene3D" id="2.40.70.10">
    <property type="entry name" value="Acid Proteases"/>
    <property type="match status" value="2"/>
</dbReference>
<dbReference type="InterPro" id="IPR001461">
    <property type="entry name" value="Aspartic_peptidase_A1"/>
</dbReference>
<dbReference type="InterPro" id="IPR001969">
    <property type="entry name" value="Aspartic_peptidase_AS"/>
</dbReference>
<dbReference type="InterPro" id="IPR012848">
    <property type="entry name" value="Aspartic_peptidase_N"/>
</dbReference>
<dbReference type="InterPro" id="IPR033121">
    <property type="entry name" value="PEPTIDASE_A1"/>
</dbReference>
<dbReference type="InterPro" id="IPR021109">
    <property type="entry name" value="Peptidase_aspartic_dom_sf"/>
</dbReference>
<dbReference type="PANTHER" id="PTHR47966">
    <property type="entry name" value="BETA-SITE APP-CLEAVING ENZYME, ISOFORM A-RELATED"/>
    <property type="match status" value="1"/>
</dbReference>
<dbReference type="PANTHER" id="PTHR47966:SF72">
    <property type="entry name" value="GASTRICSIN"/>
    <property type="match status" value="1"/>
</dbReference>
<dbReference type="Pfam" id="PF07966">
    <property type="entry name" value="A1_Propeptide"/>
    <property type="match status" value="1"/>
</dbReference>
<dbReference type="Pfam" id="PF00026">
    <property type="entry name" value="Asp"/>
    <property type="match status" value="1"/>
</dbReference>
<dbReference type="PRINTS" id="PR00792">
    <property type="entry name" value="PEPSIN"/>
</dbReference>
<dbReference type="SUPFAM" id="SSF50630">
    <property type="entry name" value="Acid proteases"/>
    <property type="match status" value="1"/>
</dbReference>
<dbReference type="PROSITE" id="PS00141">
    <property type="entry name" value="ASP_PROTEASE"/>
    <property type="match status" value="2"/>
</dbReference>
<dbReference type="PROSITE" id="PS51767">
    <property type="entry name" value="PEPTIDASE_A1"/>
    <property type="match status" value="1"/>
</dbReference>
<protein>
    <recommendedName>
        <fullName>Gastricsin</fullName>
        <ecNumber>3.4.23.3</ecNumber>
    </recommendedName>
    <alternativeName>
        <fullName>Pepsinogen C</fullName>
    </alternativeName>
</protein>
<name>PEPC_CALJA</name>
<keyword id="KW-0064">Aspartyl protease</keyword>
<keyword id="KW-0222">Digestion</keyword>
<keyword id="KW-0903">Direct protein sequencing</keyword>
<keyword id="KW-1015">Disulfide bond</keyword>
<keyword id="KW-0378">Hydrolase</keyword>
<keyword id="KW-0645">Protease</keyword>
<keyword id="KW-1185">Reference proteome</keyword>
<keyword id="KW-0964">Secreted</keyword>
<keyword id="KW-0732">Signal</keyword>
<keyword id="KW-0865">Zymogen</keyword>